<organism>
    <name type="scientific">Anaeromyxobacter dehalogenans (strain 2CP-1 / ATCC BAA-258)</name>
    <dbReference type="NCBI Taxonomy" id="455488"/>
    <lineage>
        <taxon>Bacteria</taxon>
        <taxon>Pseudomonadati</taxon>
        <taxon>Myxococcota</taxon>
        <taxon>Myxococcia</taxon>
        <taxon>Myxococcales</taxon>
        <taxon>Cystobacterineae</taxon>
        <taxon>Anaeromyxobacteraceae</taxon>
        <taxon>Anaeromyxobacter</taxon>
    </lineage>
</organism>
<reference key="1">
    <citation type="submission" date="2009-01" db="EMBL/GenBank/DDBJ databases">
        <title>Complete sequence of Anaeromyxobacter dehalogenans 2CP-1.</title>
        <authorList>
            <person name="Lucas S."/>
            <person name="Copeland A."/>
            <person name="Lapidus A."/>
            <person name="Glavina del Rio T."/>
            <person name="Dalin E."/>
            <person name="Tice H."/>
            <person name="Bruce D."/>
            <person name="Goodwin L."/>
            <person name="Pitluck S."/>
            <person name="Saunders E."/>
            <person name="Brettin T."/>
            <person name="Detter J.C."/>
            <person name="Han C."/>
            <person name="Larimer F."/>
            <person name="Land M."/>
            <person name="Hauser L."/>
            <person name="Kyrpides N."/>
            <person name="Ovchinnikova G."/>
            <person name="Beliaev A.S."/>
            <person name="Richardson P."/>
        </authorList>
    </citation>
    <scope>NUCLEOTIDE SEQUENCE [LARGE SCALE GENOMIC DNA]</scope>
    <source>
        <strain>2CP-1 / ATCC BAA-258</strain>
    </source>
</reference>
<dbReference type="EC" id="2.4.2.18" evidence="1"/>
<dbReference type="EMBL" id="CP001359">
    <property type="protein sequence ID" value="ACL67514.1"/>
    <property type="molecule type" value="Genomic_DNA"/>
</dbReference>
<dbReference type="RefSeq" id="WP_015935225.1">
    <property type="nucleotide sequence ID" value="NC_011891.1"/>
</dbReference>
<dbReference type="SMR" id="B8JAL5"/>
<dbReference type="KEGG" id="acp:A2cp1_4197"/>
<dbReference type="HOGENOM" id="CLU_034315_2_1_7"/>
<dbReference type="UniPathway" id="UPA00035">
    <property type="reaction ID" value="UER00041"/>
</dbReference>
<dbReference type="Proteomes" id="UP000007089">
    <property type="component" value="Chromosome"/>
</dbReference>
<dbReference type="GO" id="GO:0005829">
    <property type="term" value="C:cytosol"/>
    <property type="evidence" value="ECO:0007669"/>
    <property type="project" value="TreeGrafter"/>
</dbReference>
<dbReference type="GO" id="GO:0004048">
    <property type="term" value="F:anthranilate phosphoribosyltransferase activity"/>
    <property type="evidence" value="ECO:0007669"/>
    <property type="project" value="UniProtKB-UniRule"/>
</dbReference>
<dbReference type="GO" id="GO:0000287">
    <property type="term" value="F:magnesium ion binding"/>
    <property type="evidence" value="ECO:0007669"/>
    <property type="project" value="UniProtKB-UniRule"/>
</dbReference>
<dbReference type="GO" id="GO:0000162">
    <property type="term" value="P:L-tryptophan biosynthetic process"/>
    <property type="evidence" value="ECO:0007669"/>
    <property type="project" value="UniProtKB-UniRule"/>
</dbReference>
<dbReference type="FunFam" id="3.40.1030.10:FF:000002">
    <property type="entry name" value="Anthranilate phosphoribosyltransferase"/>
    <property type="match status" value="1"/>
</dbReference>
<dbReference type="Gene3D" id="3.40.1030.10">
    <property type="entry name" value="Nucleoside phosphorylase/phosphoribosyltransferase catalytic domain"/>
    <property type="match status" value="1"/>
</dbReference>
<dbReference type="Gene3D" id="1.20.970.10">
    <property type="entry name" value="Transferase, Pyrimidine Nucleoside Phosphorylase, Chain C"/>
    <property type="match status" value="1"/>
</dbReference>
<dbReference type="HAMAP" id="MF_00211">
    <property type="entry name" value="TrpD"/>
    <property type="match status" value="1"/>
</dbReference>
<dbReference type="InterPro" id="IPR005940">
    <property type="entry name" value="Anthranilate_Pribosyl_Tfrase"/>
</dbReference>
<dbReference type="InterPro" id="IPR000312">
    <property type="entry name" value="Glycosyl_Trfase_fam3"/>
</dbReference>
<dbReference type="InterPro" id="IPR017459">
    <property type="entry name" value="Glycosyl_Trfase_fam3_N_dom"/>
</dbReference>
<dbReference type="InterPro" id="IPR036320">
    <property type="entry name" value="Glycosyl_Trfase_fam3_N_dom_sf"/>
</dbReference>
<dbReference type="InterPro" id="IPR035902">
    <property type="entry name" value="Nuc_phospho_transferase"/>
</dbReference>
<dbReference type="NCBIfam" id="TIGR01245">
    <property type="entry name" value="trpD"/>
    <property type="match status" value="1"/>
</dbReference>
<dbReference type="PANTHER" id="PTHR43285">
    <property type="entry name" value="ANTHRANILATE PHOSPHORIBOSYLTRANSFERASE"/>
    <property type="match status" value="1"/>
</dbReference>
<dbReference type="PANTHER" id="PTHR43285:SF2">
    <property type="entry name" value="ANTHRANILATE PHOSPHORIBOSYLTRANSFERASE"/>
    <property type="match status" value="1"/>
</dbReference>
<dbReference type="Pfam" id="PF02885">
    <property type="entry name" value="Glycos_trans_3N"/>
    <property type="match status" value="1"/>
</dbReference>
<dbReference type="Pfam" id="PF00591">
    <property type="entry name" value="Glycos_transf_3"/>
    <property type="match status" value="1"/>
</dbReference>
<dbReference type="SUPFAM" id="SSF52418">
    <property type="entry name" value="Nucleoside phosphorylase/phosphoribosyltransferase catalytic domain"/>
    <property type="match status" value="1"/>
</dbReference>
<dbReference type="SUPFAM" id="SSF47648">
    <property type="entry name" value="Nucleoside phosphorylase/phosphoribosyltransferase N-terminal domain"/>
    <property type="match status" value="1"/>
</dbReference>
<sequence>MIQQAIAKLLEGEDLTRAEAALVMTEIADGGATPAQSGAFLAALRMKGETVDEIAGAADVMRQRADRVRVDRDVFIDTCGTGGDGRHTFNISTTAAFVAAGAGVCVAKHGNRAVSSRSGSADVLAALGVNVDADKETVERCIEEVGIGFLFAVRLHPAFKAIAGVRRELGVRTIFNLLGPLANPAGARHQVLGVYEARWVPVLGGVLAALGAAHAFVVHGEGLDEIAVTGMTHVCEVRDGQVERYTIRPEDLGLPRRDAAELVGGDAVANARIVTDVLEGQAGGPRDAVLANAAAALVCAGAAKDLRDGVARAARSIDSGAAREKLRQLVAATTVPA</sequence>
<name>TRPD_ANAD2</name>
<comment type="function">
    <text evidence="1">Catalyzes the transfer of the phosphoribosyl group of 5-phosphorylribose-1-pyrophosphate (PRPP) to anthranilate to yield N-(5'-phosphoribosyl)-anthranilate (PRA).</text>
</comment>
<comment type="catalytic activity">
    <reaction evidence="1">
        <text>N-(5-phospho-beta-D-ribosyl)anthranilate + diphosphate = 5-phospho-alpha-D-ribose 1-diphosphate + anthranilate</text>
        <dbReference type="Rhea" id="RHEA:11768"/>
        <dbReference type="ChEBI" id="CHEBI:16567"/>
        <dbReference type="ChEBI" id="CHEBI:18277"/>
        <dbReference type="ChEBI" id="CHEBI:33019"/>
        <dbReference type="ChEBI" id="CHEBI:58017"/>
        <dbReference type="EC" id="2.4.2.18"/>
    </reaction>
</comment>
<comment type="cofactor">
    <cofactor evidence="1">
        <name>Mg(2+)</name>
        <dbReference type="ChEBI" id="CHEBI:18420"/>
    </cofactor>
    <text evidence="1">Binds 2 magnesium ions per monomer.</text>
</comment>
<comment type="pathway">
    <text evidence="1">Amino-acid biosynthesis; L-tryptophan biosynthesis; L-tryptophan from chorismate: step 2/5.</text>
</comment>
<comment type="subunit">
    <text evidence="1">Homodimer.</text>
</comment>
<comment type="similarity">
    <text evidence="1">Belongs to the anthranilate phosphoribosyltransferase family.</text>
</comment>
<keyword id="KW-0028">Amino-acid biosynthesis</keyword>
<keyword id="KW-0057">Aromatic amino acid biosynthesis</keyword>
<keyword id="KW-0328">Glycosyltransferase</keyword>
<keyword id="KW-0460">Magnesium</keyword>
<keyword id="KW-0479">Metal-binding</keyword>
<keyword id="KW-0808">Transferase</keyword>
<keyword id="KW-0822">Tryptophan biosynthesis</keyword>
<gene>
    <name evidence="1" type="primary">trpD</name>
    <name type="ordered locus">A2cp1_4197</name>
</gene>
<protein>
    <recommendedName>
        <fullName evidence="1">Anthranilate phosphoribosyltransferase</fullName>
        <ecNumber evidence="1">2.4.2.18</ecNumber>
    </recommendedName>
</protein>
<feature type="chain" id="PRO_1000198798" description="Anthranilate phosphoribosyltransferase">
    <location>
        <begin position="1"/>
        <end position="337"/>
    </location>
</feature>
<feature type="binding site" evidence="1">
    <location>
        <position position="80"/>
    </location>
    <ligand>
        <name>5-phospho-alpha-D-ribose 1-diphosphate</name>
        <dbReference type="ChEBI" id="CHEBI:58017"/>
    </ligand>
</feature>
<feature type="binding site" evidence="1">
    <location>
        <position position="80"/>
    </location>
    <ligand>
        <name>anthranilate</name>
        <dbReference type="ChEBI" id="CHEBI:16567"/>
        <label>1</label>
    </ligand>
</feature>
<feature type="binding site" evidence="1">
    <location>
        <begin position="83"/>
        <end position="84"/>
    </location>
    <ligand>
        <name>5-phospho-alpha-D-ribose 1-diphosphate</name>
        <dbReference type="ChEBI" id="CHEBI:58017"/>
    </ligand>
</feature>
<feature type="binding site" evidence="1">
    <location>
        <position position="88"/>
    </location>
    <ligand>
        <name>5-phospho-alpha-D-ribose 1-diphosphate</name>
        <dbReference type="ChEBI" id="CHEBI:58017"/>
    </ligand>
</feature>
<feature type="binding site" evidence="1">
    <location>
        <begin position="90"/>
        <end position="93"/>
    </location>
    <ligand>
        <name>5-phospho-alpha-D-ribose 1-diphosphate</name>
        <dbReference type="ChEBI" id="CHEBI:58017"/>
    </ligand>
</feature>
<feature type="binding site" evidence="1">
    <location>
        <position position="92"/>
    </location>
    <ligand>
        <name>Mg(2+)</name>
        <dbReference type="ChEBI" id="CHEBI:18420"/>
        <label>1</label>
    </ligand>
</feature>
<feature type="binding site" evidence="1">
    <location>
        <begin position="108"/>
        <end position="116"/>
    </location>
    <ligand>
        <name>5-phospho-alpha-D-ribose 1-diphosphate</name>
        <dbReference type="ChEBI" id="CHEBI:58017"/>
    </ligand>
</feature>
<feature type="binding site" evidence="1">
    <location>
        <position position="111"/>
    </location>
    <ligand>
        <name>anthranilate</name>
        <dbReference type="ChEBI" id="CHEBI:16567"/>
        <label>1</label>
    </ligand>
</feature>
<feature type="binding site" evidence="1">
    <location>
        <position position="120"/>
    </location>
    <ligand>
        <name>5-phospho-alpha-D-ribose 1-diphosphate</name>
        <dbReference type="ChEBI" id="CHEBI:58017"/>
    </ligand>
</feature>
<feature type="binding site" evidence="1">
    <location>
        <position position="166"/>
    </location>
    <ligand>
        <name>anthranilate</name>
        <dbReference type="ChEBI" id="CHEBI:16567"/>
        <label>2</label>
    </ligand>
</feature>
<feature type="binding site" evidence="1">
    <location>
        <position position="224"/>
    </location>
    <ligand>
        <name>Mg(2+)</name>
        <dbReference type="ChEBI" id="CHEBI:18420"/>
        <label>2</label>
    </ligand>
</feature>
<feature type="binding site" evidence="1">
    <location>
        <position position="225"/>
    </location>
    <ligand>
        <name>Mg(2+)</name>
        <dbReference type="ChEBI" id="CHEBI:18420"/>
        <label>1</label>
    </ligand>
</feature>
<feature type="binding site" evidence="1">
    <location>
        <position position="225"/>
    </location>
    <ligand>
        <name>Mg(2+)</name>
        <dbReference type="ChEBI" id="CHEBI:18420"/>
        <label>2</label>
    </ligand>
</feature>
<evidence type="ECO:0000255" key="1">
    <source>
        <dbReference type="HAMAP-Rule" id="MF_00211"/>
    </source>
</evidence>
<proteinExistence type="inferred from homology"/>
<accession>B8JAL5</accession>